<reference key="1">
    <citation type="journal article" date="2004" name="Proc. Natl. Acad. Sci. U.S.A.">
        <title>The genome sequence of the probiotic intestinal bacterium Lactobacillus johnsonii NCC 533.</title>
        <authorList>
            <person name="Pridmore R.D."/>
            <person name="Berger B."/>
            <person name="Desiere F."/>
            <person name="Vilanova D."/>
            <person name="Barretto C."/>
            <person name="Pittet A.-C."/>
            <person name="Zwahlen M.-C."/>
            <person name="Rouvet M."/>
            <person name="Altermann E."/>
            <person name="Barrangou R."/>
            <person name="Mollet B."/>
            <person name="Mercenier A."/>
            <person name="Klaenhammer T."/>
            <person name="Arigoni F."/>
            <person name="Schell M.A."/>
        </authorList>
    </citation>
    <scope>NUCLEOTIDE SEQUENCE [LARGE SCALE GENOMIC DNA]</scope>
    <source>
        <strain>CNCM I-1225 / La1 / NCC 533</strain>
    </source>
</reference>
<organism>
    <name type="scientific">Lactobacillus johnsonii (strain CNCM I-12250 / La1 / NCC 533)</name>
    <dbReference type="NCBI Taxonomy" id="257314"/>
    <lineage>
        <taxon>Bacteria</taxon>
        <taxon>Bacillati</taxon>
        <taxon>Bacillota</taxon>
        <taxon>Bacilli</taxon>
        <taxon>Lactobacillales</taxon>
        <taxon>Lactobacillaceae</taxon>
        <taxon>Lactobacillus</taxon>
    </lineage>
</organism>
<name>PPAC_LACJO</name>
<gene>
    <name evidence="1" type="primary">ppaC</name>
    <name type="ordered locus">LJ_1173</name>
</gene>
<dbReference type="EC" id="3.6.1.1" evidence="1"/>
<dbReference type="EMBL" id="AE017198">
    <property type="protein sequence ID" value="AAS08995.1"/>
    <property type="molecule type" value="Genomic_DNA"/>
</dbReference>
<dbReference type="RefSeq" id="WP_004894829.1">
    <property type="nucleotide sequence ID" value="NC_005362.1"/>
</dbReference>
<dbReference type="SMR" id="Q74JD5"/>
<dbReference type="KEGG" id="ljo:LJ_1173"/>
<dbReference type="eggNOG" id="COG1227">
    <property type="taxonomic scope" value="Bacteria"/>
</dbReference>
<dbReference type="HOGENOM" id="CLU_025243_0_1_9"/>
<dbReference type="Proteomes" id="UP000000581">
    <property type="component" value="Chromosome"/>
</dbReference>
<dbReference type="GO" id="GO:0005737">
    <property type="term" value="C:cytoplasm"/>
    <property type="evidence" value="ECO:0007669"/>
    <property type="project" value="UniProtKB-SubCell"/>
</dbReference>
<dbReference type="GO" id="GO:0004427">
    <property type="term" value="F:inorganic diphosphate phosphatase activity"/>
    <property type="evidence" value="ECO:0007669"/>
    <property type="project" value="UniProtKB-UniRule"/>
</dbReference>
<dbReference type="GO" id="GO:0030145">
    <property type="term" value="F:manganese ion binding"/>
    <property type="evidence" value="ECO:0007669"/>
    <property type="project" value="UniProtKB-UniRule"/>
</dbReference>
<dbReference type="FunFam" id="3.10.310.20:FF:000001">
    <property type="entry name" value="Probable manganese-dependent inorganic pyrophosphatase"/>
    <property type="match status" value="1"/>
</dbReference>
<dbReference type="FunFam" id="3.90.1640.10:FF:000001">
    <property type="entry name" value="Probable manganese-dependent inorganic pyrophosphatase"/>
    <property type="match status" value="1"/>
</dbReference>
<dbReference type="Gene3D" id="3.10.310.20">
    <property type="entry name" value="DHHA2 domain"/>
    <property type="match status" value="1"/>
</dbReference>
<dbReference type="Gene3D" id="3.90.1640.10">
    <property type="entry name" value="inorganic pyrophosphatase (n-terminal core)"/>
    <property type="match status" value="1"/>
</dbReference>
<dbReference type="HAMAP" id="MF_00207">
    <property type="entry name" value="PPase_C"/>
    <property type="match status" value="1"/>
</dbReference>
<dbReference type="InterPro" id="IPR001667">
    <property type="entry name" value="DDH_dom"/>
</dbReference>
<dbReference type="InterPro" id="IPR038763">
    <property type="entry name" value="DHH_sf"/>
</dbReference>
<dbReference type="InterPro" id="IPR004097">
    <property type="entry name" value="DHHA2"/>
</dbReference>
<dbReference type="InterPro" id="IPR038222">
    <property type="entry name" value="DHHA2_dom_sf"/>
</dbReference>
<dbReference type="InterPro" id="IPR022934">
    <property type="entry name" value="Mn-dep_inorganic_PyrPase"/>
</dbReference>
<dbReference type="NCBIfam" id="NF003877">
    <property type="entry name" value="PRK05427.1"/>
    <property type="match status" value="1"/>
</dbReference>
<dbReference type="PANTHER" id="PTHR12112">
    <property type="entry name" value="BNIP - RELATED"/>
    <property type="match status" value="1"/>
</dbReference>
<dbReference type="PANTHER" id="PTHR12112:SF22">
    <property type="entry name" value="MANGANESE-DEPENDENT INORGANIC PYROPHOSPHATASE-RELATED"/>
    <property type="match status" value="1"/>
</dbReference>
<dbReference type="Pfam" id="PF01368">
    <property type="entry name" value="DHH"/>
    <property type="match status" value="1"/>
</dbReference>
<dbReference type="Pfam" id="PF02833">
    <property type="entry name" value="DHHA2"/>
    <property type="match status" value="1"/>
</dbReference>
<dbReference type="SMART" id="SM01131">
    <property type="entry name" value="DHHA2"/>
    <property type="match status" value="1"/>
</dbReference>
<dbReference type="SUPFAM" id="SSF64182">
    <property type="entry name" value="DHH phosphoesterases"/>
    <property type="match status" value="1"/>
</dbReference>
<evidence type="ECO:0000255" key="1">
    <source>
        <dbReference type="HAMAP-Rule" id="MF_00207"/>
    </source>
</evidence>
<accession>Q74JD5</accession>
<proteinExistence type="inferred from homology"/>
<keyword id="KW-0963">Cytoplasm</keyword>
<keyword id="KW-0378">Hydrolase</keyword>
<keyword id="KW-0464">Manganese</keyword>
<keyword id="KW-0479">Metal-binding</keyword>
<comment type="catalytic activity">
    <reaction evidence="1">
        <text>diphosphate + H2O = 2 phosphate + H(+)</text>
        <dbReference type="Rhea" id="RHEA:24576"/>
        <dbReference type="ChEBI" id="CHEBI:15377"/>
        <dbReference type="ChEBI" id="CHEBI:15378"/>
        <dbReference type="ChEBI" id="CHEBI:33019"/>
        <dbReference type="ChEBI" id="CHEBI:43474"/>
        <dbReference type="EC" id="3.6.1.1"/>
    </reaction>
</comment>
<comment type="cofactor">
    <cofactor evidence="1">
        <name>Mn(2+)</name>
        <dbReference type="ChEBI" id="CHEBI:29035"/>
    </cofactor>
    <text evidence="1">Binds 2 manganese ions per subunit.</text>
</comment>
<comment type="subcellular location">
    <subcellularLocation>
        <location evidence="1">Cytoplasm</location>
    </subcellularLocation>
</comment>
<comment type="similarity">
    <text evidence="1">Belongs to the PPase class C family.</text>
</comment>
<sequence length="311" mass="34233">MAKELIFGHQNPDTDAIGTAIAYSYLQNKLGYDTEAVALGEANDETKYALNKFGFTAPRVIKTASNEVDAVMLVDHNEPQQSVSDIDKVKVTHVVDHHRIMNFNTADPLYYRAAPVGCTSTIMWQMYNEKEIEIPQDIAGIMLSAIISDTLLLKSPTTTDQDKEAVVSLANIAGVDYKEYGLKMLKAGTNIADKSEEDLIDLDAKSFELNGSNVRVAQINVVDLPEALERKDAFLKAMDEASKREGYDMFMLLITNILDSDSEALVVGSDESKAKFEKAFNAKLSDSEVKLPGVVSRKKQVVPPLTNAFEA</sequence>
<feature type="chain" id="PRO_1000012316" description="Probable manganese-dependent inorganic pyrophosphatase">
    <location>
        <begin position="1"/>
        <end position="311"/>
    </location>
</feature>
<feature type="binding site" evidence="1">
    <location>
        <position position="9"/>
    </location>
    <ligand>
        <name>Mn(2+)</name>
        <dbReference type="ChEBI" id="CHEBI:29035"/>
        <label>1</label>
    </ligand>
</feature>
<feature type="binding site" evidence="1">
    <location>
        <position position="13"/>
    </location>
    <ligand>
        <name>Mn(2+)</name>
        <dbReference type="ChEBI" id="CHEBI:29035"/>
        <label>1</label>
    </ligand>
</feature>
<feature type="binding site" evidence="1">
    <location>
        <position position="15"/>
    </location>
    <ligand>
        <name>Mn(2+)</name>
        <dbReference type="ChEBI" id="CHEBI:29035"/>
        <label>2</label>
    </ligand>
</feature>
<feature type="binding site" evidence="1">
    <location>
        <position position="75"/>
    </location>
    <ligand>
        <name>Mn(2+)</name>
        <dbReference type="ChEBI" id="CHEBI:29035"/>
        <label>1</label>
    </ligand>
</feature>
<feature type="binding site" evidence="1">
    <location>
        <position position="75"/>
    </location>
    <ligand>
        <name>Mn(2+)</name>
        <dbReference type="ChEBI" id="CHEBI:29035"/>
        <label>2</label>
    </ligand>
</feature>
<feature type="binding site" evidence="1">
    <location>
        <position position="97"/>
    </location>
    <ligand>
        <name>Mn(2+)</name>
        <dbReference type="ChEBI" id="CHEBI:29035"/>
        <label>2</label>
    </ligand>
</feature>
<feature type="binding site" evidence="1">
    <location>
        <position position="149"/>
    </location>
    <ligand>
        <name>Mn(2+)</name>
        <dbReference type="ChEBI" id="CHEBI:29035"/>
        <label>2</label>
    </ligand>
</feature>
<protein>
    <recommendedName>
        <fullName evidence="1">Probable manganese-dependent inorganic pyrophosphatase</fullName>
        <ecNumber evidence="1">3.6.1.1</ecNumber>
    </recommendedName>
    <alternativeName>
        <fullName evidence="1">Pyrophosphate phospho-hydrolase</fullName>
        <shortName evidence="1">PPase</shortName>
    </alternativeName>
</protein>